<protein>
    <recommendedName>
        <fullName>Probable cysteine--tRNA ligase</fullName>
        <ecNumber>6.1.1.16</ecNumber>
    </recommendedName>
    <alternativeName>
        <fullName>Cysteinyl-tRNA synthetase</fullName>
        <shortName>CysRS</shortName>
    </alternativeName>
</protein>
<accession>Q09860</accession>
<organism>
    <name type="scientific">Schizosaccharomyces pombe (strain 972 / ATCC 24843)</name>
    <name type="common">Fission yeast</name>
    <dbReference type="NCBI Taxonomy" id="284812"/>
    <lineage>
        <taxon>Eukaryota</taxon>
        <taxon>Fungi</taxon>
        <taxon>Dikarya</taxon>
        <taxon>Ascomycota</taxon>
        <taxon>Taphrinomycotina</taxon>
        <taxon>Schizosaccharomycetes</taxon>
        <taxon>Schizosaccharomycetales</taxon>
        <taxon>Schizosaccharomycetaceae</taxon>
        <taxon>Schizosaccharomyces</taxon>
    </lineage>
</organism>
<keyword id="KW-0030">Aminoacyl-tRNA synthetase</keyword>
<keyword id="KW-0067">ATP-binding</keyword>
<keyword id="KW-0436">Ligase</keyword>
<keyword id="KW-0479">Metal-binding</keyword>
<keyword id="KW-0547">Nucleotide-binding</keyword>
<keyword id="KW-0648">Protein biosynthesis</keyword>
<keyword id="KW-1185">Reference proteome</keyword>
<keyword id="KW-0862">Zinc</keyword>
<dbReference type="EC" id="6.1.1.16"/>
<dbReference type="EMBL" id="Z66525">
    <property type="protein sequence ID" value="CAA91428.1"/>
    <property type="molecule type" value="Genomic_DNA"/>
</dbReference>
<dbReference type="EMBL" id="CU329670">
    <property type="protein sequence ID" value="CAB66469.1"/>
    <property type="molecule type" value="Genomic_DNA"/>
</dbReference>
<dbReference type="PIR" id="T38507">
    <property type="entry name" value="S62512"/>
</dbReference>
<dbReference type="RefSeq" id="NP_594564.1">
    <property type="nucleotide sequence ID" value="NM_001019993.2"/>
</dbReference>
<dbReference type="SMR" id="Q09860"/>
<dbReference type="BioGRID" id="279172">
    <property type="interactions" value="3"/>
</dbReference>
<dbReference type="FunCoup" id="Q09860">
    <property type="interactions" value="824"/>
</dbReference>
<dbReference type="STRING" id="284812.Q09860"/>
<dbReference type="iPTMnet" id="Q09860"/>
<dbReference type="PaxDb" id="4896-SPAC29E6.06c.1"/>
<dbReference type="EnsemblFungi" id="SPAC29E6.06c.1">
    <property type="protein sequence ID" value="SPAC29E6.06c.1:pep"/>
    <property type="gene ID" value="SPAC29E6.06c"/>
</dbReference>
<dbReference type="KEGG" id="spo:2542721"/>
<dbReference type="PomBase" id="SPAC29E6.06c"/>
<dbReference type="VEuPathDB" id="FungiDB:SPAC29E6.06c"/>
<dbReference type="eggNOG" id="KOG2007">
    <property type="taxonomic scope" value="Eukaryota"/>
</dbReference>
<dbReference type="HOGENOM" id="CLU_013528_3_1_1"/>
<dbReference type="InParanoid" id="Q09860"/>
<dbReference type="OMA" id="FHNDMKS"/>
<dbReference type="PhylomeDB" id="Q09860"/>
<dbReference type="PRO" id="PR:Q09860"/>
<dbReference type="Proteomes" id="UP000002485">
    <property type="component" value="Chromosome I"/>
</dbReference>
<dbReference type="GO" id="GO:0005737">
    <property type="term" value="C:cytoplasm"/>
    <property type="evidence" value="ECO:0000318"/>
    <property type="project" value="GO_Central"/>
</dbReference>
<dbReference type="GO" id="GO:0005829">
    <property type="term" value="C:cytosol"/>
    <property type="evidence" value="ECO:0007005"/>
    <property type="project" value="PomBase"/>
</dbReference>
<dbReference type="GO" id="GO:0005524">
    <property type="term" value="F:ATP binding"/>
    <property type="evidence" value="ECO:0000318"/>
    <property type="project" value="GO_Central"/>
</dbReference>
<dbReference type="GO" id="GO:0004817">
    <property type="term" value="F:cysteine-tRNA ligase activity"/>
    <property type="evidence" value="ECO:0000318"/>
    <property type="project" value="GO_Central"/>
</dbReference>
<dbReference type="GO" id="GO:0046872">
    <property type="term" value="F:metal ion binding"/>
    <property type="evidence" value="ECO:0007669"/>
    <property type="project" value="UniProtKB-KW"/>
</dbReference>
<dbReference type="GO" id="GO:0006423">
    <property type="term" value="P:cysteinyl-tRNA aminoacylation"/>
    <property type="evidence" value="ECO:0000318"/>
    <property type="project" value="GO_Central"/>
</dbReference>
<dbReference type="GO" id="GO:0002181">
    <property type="term" value="P:cytoplasmic translation"/>
    <property type="evidence" value="ECO:0000303"/>
    <property type="project" value="PomBase"/>
</dbReference>
<dbReference type="CDD" id="cd00672">
    <property type="entry name" value="CysRS_core"/>
    <property type="match status" value="1"/>
</dbReference>
<dbReference type="Gene3D" id="3.40.50.620">
    <property type="entry name" value="HUPs"/>
    <property type="match status" value="1"/>
</dbReference>
<dbReference type="HAMAP" id="MF_00041">
    <property type="entry name" value="Cys_tRNA_synth"/>
    <property type="match status" value="1"/>
</dbReference>
<dbReference type="InterPro" id="IPR015803">
    <property type="entry name" value="Cys-tRNA-ligase"/>
</dbReference>
<dbReference type="InterPro" id="IPR024909">
    <property type="entry name" value="Cys-tRNA/MSH_ligase"/>
</dbReference>
<dbReference type="InterPro" id="IPR014729">
    <property type="entry name" value="Rossmann-like_a/b/a_fold"/>
</dbReference>
<dbReference type="InterPro" id="IPR032678">
    <property type="entry name" value="tRNA-synt_1_cat_dom"/>
</dbReference>
<dbReference type="InterPro" id="IPR009080">
    <property type="entry name" value="tRNAsynth_Ia_anticodon-bd"/>
</dbReference>
<dbReference type="NCBIfam" id="TIGR00435">
    <property type="entry name" value="cysS"/>
    <property type="match status" value="1"/>
</dbReference>
<dbReference type="PANTHER" id="PTHR10890:SF3">
    <property type="entry name" value="CYSTEINE--TRNA LIGASE, CYTOPLASMIC"/>
    <property type="match status" value="1"/>
</dbReference>
<dbReference type="PANTHER" id="PTHR10890">
    <property type="entry name" value="CYSTEINYL-TRNA SYNTHETASE"/>
    <property type="match status" value="1"/>
</dbReference>
<dbReference type="Pfam" id="PF01406">
    <property type="entry name" value="tRNA-synt_1e"/>
    <property type="match status" value="1"/>
</dbReference>
<dbReference type="PRINTS" id="PR00983">
    <property type="entry name" value="TRNASYNTHCYS"/>
</dbReference>
<dbReference type="SUPFAM" id="SSF47323">
    <property type="entry name" value="Anticodon-binding domain of a subclass of class I aminoacyl-tRNA synthetases"/>
    <property type="match status" value="1"/>
</dbReference>
<dbReference type="SUPFAM" id="SSF52374">
    <property type="entry name" value="Nucleotidylyl transferase"/>
    <property type="match status" value="1"/>
</dbReference>
<name>SYC_SCHPO</name>
<gene>
    <name type="ORF">SPAC29E6.06c</name>
    <name type="ORF">SPAC30.10c</name>
</gene>
<proteinExistence type="inferred from homology"/>
<reference key="1">
    <citation type="journal article" date="2002" name="Nature">
        <title>The genome sequence of Schizosaccharomyces pombe.</title>
        <authorList>
            <person name="Wood V."/>
            <person name="Gwilliam R."/>
            <person name="Rajandream M.A."/>
            <person name="Lyne M.H."/>
            <person name="Lyne R."/>
            <person name="Stewart A."/>
            <person name="Sgouros J.G."/>
            <person name="Peat N."/>
            <person name="Hayles J."/>
            <person name="Baker S.G."/>
            <person name="Basham D."/>
            <person name="Bowman S."/>
            <person name="Brooks K."/>
            <person name="Brown D."/>
            <person name="Brown S."/>
            <person name="Chillingworth T."/>
            <person name="Churcher C.M."/>
            <person name="Collins M."/>
            <person name="Connor R."/>
            <person name="Cronin A."/>
            <person name="Davis P."/>
            <person name="Feltwell T."/>
            <person name="Fraser A."/>
            <person name="Gentles S."/>
            <person name="Goble A."/>
            <person name="Hamlin N."/>
            <person name="Harris D.E."/>
            <person name="Hidalgo J."/>
            <person name="Hodgson G."/>
            <person name="Holroyd S."/>
            <person name="Hornsby T."/>
            <person name="Howarth S."/>
            <person name="Huckle E.J."/>
            <person name="Hunt S."/>
            <person name="Jagels K."/>
            <person name="James K.D."/>
            <person name="Jones L."/>
            <person name="Jones M."/>
            <person name="Leather S."/>
            <person name="McDonald S."/>
            <person name="McLean J."/>
            <person name="Mooney P."/>
            <person name="Moule S."/>
            <person name="Mungall K.L."/>
            <person name="Murphy L.D."/>
            <person name="Niblett D."/>
            <person name="Odell C."/>
            <person name="Oliver K."/>
            <person name="O'Neil S."/>
            <person name="Pearson D."/>
            <person name="Quail M.A."/>
            <person name="Rabbinowitsch E."/>
            <person name="Rutherford K.M."/>
            <person name="Rutter S."/>
            <person name="Saunders D."/>
            <person name="Seeger K."/>
            <person name="Sharp S."/>
            <person name="Skelton J."/>
            <person name="Simmonds M.N."/>
            <person name="Squares R."/>
            <person name="Squares S."/>
            <person name="Stevens K."/>
            <person name="Taylor K."/>
            <person name="Taylor R.G."/>
            <person name="Tivey A."/>
            <person name="Walsh S.V."/>
            <person name="Warren T."/>
            <person name="Whitehead S."/>
            <person name="Woodward J.R."/>
            <person name="Volckaert G."/>
            <person name="Aert R."/>
            <person name="Robben J."/>
            <person name="Grymonprez B."/>
            <person name="Weltjens I."/>
            <person name="Vanstreels E."/>
            <person name="Rieger M."/>
            <person name="Schaefer M."/>
            <person name="Mueller-Auer S."/>
            <person name="Gabel C."/>
            <person name="Fuchs M."/>
            <person name="Duesterhoeft A."/>
            <person name="Fritzc C."/>
            <person name="Holzer E."/>
            <person name="Moestl D."/>
            <person name="Hilbert H."/>
            <person name="Borzym K."/>
            <person name="Langer I."/>
            <person name="Beck A."/>
            <person name="Lehrach H."/>
            <person name="Reinhardt R."/>
            <person name="Pohl T.M."/>
            <person name="Eger P."/>
            <person name="Zimmermann W."/>
            <person name="Wedler H."/>
            <person name="Wambutt R."/>
            <person name="Purnelle B."/>
            <person name="Goffeau A."/>
            <person name="Cadieu E."/>
            <person name="Dreano S."/>
            <person name="Gloux S."/>
            <person name="Lelaure V."/>
            <person name="Mottier S."/>
            <person name="Galibert F."/>
            <person name="Aves S.J."/>
            <person name="Xiang Z."/>
            <person name="Hunt C."/>
            <person name="Moore K."/>
            <person name="Hurst S.M."/>
            <person name="Lucas M."/>
            <person name="Rochet M."/>
            <person name="Gaillardin C."/>
            <person name="Tallada V.A."/>
            <person name="Garzon A."/>
            <person name="Thode G."/>
            <person name="Daga R.R."/>
            <person name="Cruzado L."/>
            <person name="Jimenez J."/>
            <person name="Sanchez M."/>
            <person name="del Rey F."/>
            <person name="Benito J."/>
            <person name="Dominguez A."/>
            <person name="Revuelta J.L."/>
            <person name="Moreno S."/>
            <person name="Armstrong J."/>
            <person name="Forsburg S.L."/>
            <person name="Cerutti L."/>
            <person name="Lowe T."/>
            <person name="McCombie W.R."/>
            <person name="Paulsen I."/>
            <person name="Potashkin J."/>
            <person name="Shpakovski G.V."/>
            <person name="Ussery D."/>
            <person name="Barrell B.G."/>
            <person name="Nurse P."/>
        </authorList>
    </citation>
    <scope>NUCLEOTIDE SEQUENCE [LARGE SCALE GENOMIC DNA]</scope>
    <source>
        <strain>972 / ATCC 24843</strain>
    </source>
</reference>
<feature type="chain" id="PRO_0000159552" description="Probable cysteine--tRNA ligase">
    <location>
        <begin position="1"/>
        <end position="754"/>
    </location>
</feature>
<feature type="region of interest" description="Disordered" evidence="2">
    <location>
        <begin position="664"/>
        <end position="686"/>
    </location>
</feature>
<feature type="region of interest" description="Disordered" evidence="2">
    <location>
        <begin position="709"/>
        <end position="736"/>
    </location>
</feature>
<feature type="short sequence motif" description="'HIGH' region">
    <location>
        <begin position="48"/>
        <end position="58"/>
    </location>
</feature>
<feature type="short sequence motif" description="'KMSKS' region">
    <location>
        <begin position="408"/>
        <end position="412"/>
    </location>
</feature>
<feature type="compositionally biased region" description="Basic and acidic residues" evidence="2">
    <location>
        <begin position="672"/>
        <end position="685"/>
    </location>
</feature>
<feature type="compositionally biased region" description="Basic and acidic residues" evidence="2">
    <location>
        <begin position="713"/>
        <end position="725"/>
    </location>
</feature>
<feature type="binding site" evidence="1">
    <location>
        <position position="46"/>
    </location>
    <ligand>
        <name>Zn(2+)</name>
        <dbReference type="ChEBI" id="CHEBI:29105"/>
    </ligand>
</feature>
<feature type="binding site" evidence="1">
    <location>
        <position position="350"/>
    </location>
    <ligand>
        <name>Zn(2+)</name>
        <dbReference type="ChEBI" id="CHEBI:29105"/>
    </ligand>
</feature>
<feature type="binding site" evidence="1">
    <location>
        <position position="375"/>
    </location>
    <ligand>
        <name>Zn(2+)</name>
        <dbReference type="ChEBI" id="CHEBI:29105"/>
    </ligand>
</feature>
<feature type="binding site" evidence="1">
    <location>
        <position position="379"/>
    </location>
    <ligand>
        <name>Zn(2+)</name>
        <dbReference type="ChEBI" id="CHEBI:29105"/>
    </ligand>
</feature>
<feature type="binding site" evidence="1">
    <location>
        <position position="411"/>
    </location>
    <ligand>
        <name>ATP</name>
        <dbReference type="ChEBI" id="CHEBI:30616"/>
    </ligand>
</feature>
<sequence>MSTRNPAQSHWGVPKGQRTELYVYNTLTHSKVPFVSNGSNLTWYCCGPTVYDASHMGHARNYVTTDILRRILQSYFGYNITFVQNVTDIDDKIILRARQQYLFEEYKKQQGTNKSHSEAREKVTEAWFAYAKKNLPEPPSSMSEWPQWLASHDIPTLAINNPKLPMHVDALKSALDALQVSEASEIISLDGFWPKVQDVLVPLLDAELGSTVTDPAIFRKLAAYWEDDFNKDMANLNVLPPTAVTRVSEYVPEIVDFVQRIIDRGYAYPVTDGSVYFDTEAFEKGGHFYAKLEPWNKGNRELIAEGEGSLAALTGKKRPGDFALWKASKPGEPSWDSPWSKGRPGWHIECSVMASALLGSNIDIHSGGIDLAFPHHDNELAQSEAYFDCPQWVNYFFHAGHLHIEGQKMSKSLKNFITIKEILKKFTPRQLRLAFLLQQWNTQLDFKETLLAYVLNIEQALENFFRTVRALMNETEGVSANGGHVPEKFDKLEIELLEKFQQTQQNTHLALCDSFNTPLVMQHIDNLVTQANIYIREVGQQPCSRLLGQIASWITSMLQIFGLDENGHPNAVGWSSSKGSSSENTDAMPYIRAVSSFRDRVRELCIAKASSQEILKACDIFRDYDMAALGVSFNDRPQGSALVKLVDAEELIAAREQKLEEERAKQAKKAQAKAEQEKKQVERVMKGKTSPSEMFKMFKEYLSFDEAGLPTKMRGEDGSEIDVPKSRKKKLQKEYAQQEKLHKEYLSYIESNKS</sequence>
<evidence type="ECO:0000250" key="1"/>
<evidence type="ECO:0000256" key="2">
    <source>
        <dbReference type="SAM" id="MobiDB-lite"/>
    </source>
</evidence>
<evidence type="ECO:0000305" key="3"/>
<comment type="catalytic activity">
    <reaction>
        <text>tRNA(Cys) + L-cysteine + ATP = L-cysteinyl-tRNA(Cys) + AMP + diphosphate</text>
        <dbReference type="Rhea" id="RHEA:17773"/>
        <dbReference type="Rhea" id="RHEA-COMP:9661"/>
        <dbReference type="Rhea" id="RHEA-COMP:9679"/>
        <dbReference type="ChEBI" id="CHEBI:30616"/>
        <dbReference type="ChEBI" id="CHEBI:33019"/>
        <dbReference type="ChEBI" id="CHEBI:35235"/>
        <dbReference type="ChEBI" id="CHEBI:78442"/>
        <dbReference type="ChEBI" id="CHEBI:78517"/>
        <dbReference type="ChEBI" id="CHEBI:456215"/>
        <dbReference type="EC" id="6.1.1.16"/>
    </reaction>
</comment>
<comment type="cofactor">
    <cofactor evidence="1">
        <name>Zn(2+)</name>
        <dbReference type="ChEBI" id="CHEBI:29105"/>
    </cofactor>
    <text evidence="1">Binds 1 zinc ion per subunit.</text>
</comment>
<comment type="similarity">
    <text evidence="3">Belongs to the class-I aminoacyl-tRNA synthetase family.</text>
</comment>